<sequence>MEEFKGYLQKGGFKQQHFLYPLLFQEYIYALAHDQGLNVNASTFTEPPEISGYHNKYSSLLVKRLIKRIYQQNRFIYSVTNSKQNRFVGHNNHFYSQMISEGFSSVVEIPFSPRLVSSLKKKKEIPKYQNLRSIHSLFPFLEDKFTHLTYVSDILIPYPVHLEILVQILQCWIQDVPTLHLLRLLFHEYHNGNNSITPNKSTYGFSKDNPRLYRFLYNSYVVECESIFLFLRKSSSYLRSRSFGPLLERTQFYGKMKHIGVTCCNDFHKSLCLFKDPFMHYVRYQGKSIMASKGTDFLMKKWKSYFVNLWQYRFHFWSEPSRIHINQFPHFSFYFLGYLSSVPINLSYAKSQMLENSFLIETFTQKFETMISIIPMIGSLAKAKFCNLSGNPISKPAWADLSDSDIIDRFGRIYRNLSHYYSGSSKKQTLYRIKYILRLSCARTLARKHKSTVRAFLQRLGSEFFEEFFMEEEKVLSLILARTSYSSHQLSREPVWYLDIVRINDLVNHLDL</sequence>
<organism>
    <name type="scientific">Lemna aequinoctialis</name>
    <name type="common">Lesser duckweed</name>
    <dbReference type="NCBI Taxonomy" id="89585"/>
    <lineage>
        <taxon>Eukaryota</taxon>
        <taxon>Viridiplantae</taxon>
        <taxon>Streptophyta</taxon>
        <taxon>Embryophyta</taxon>
        <taxon>Tracheophyta</taxon>
        <taxon>Spermatophyta</taxon>
        <taxon>Magnoliopsida</taxon>
        <taxon>Liliopsida</taxon>
        <taxon>Araceae</taxon>
        <taxon>Lemnoideae</taxon>
        <taxon>Lemna</taxon>
    </lineage>
</organism>
<name>MATK_LEMAE</name>
<geneLocation type="chloroplast"/>
<gene>
    <name evidence="1" type="primary">matK</name>
</gene>
<comment type="function">
    <text evidence="1">Usually encoded in the trnK tRNA gene intron. Probably assists in splicing its own and other chloroplast group II introns.</text>
</comment>
<comment type="subcellular location">
    <subcellularLocation>
        <location>Plastid</location>
        <location>Chloroplast</location>
    </subcellularLocation>
</comment>
<comment type="similarity">
    <text evidence="1">Belongs to the intron maturase 2 family. MatK subfamily.</text>
</comment>
<protein>
    <recommendedName>
        <fullName evidence="1">Maturase K</fullName>
    </recommendedName>
    <alternativeName>
        <fullName evidence="1">Intron maturase</fullName>
    </alternativeName>
</protein>
<feature type="chain" id="PRO_0000143464" description="Maturase K">
    <location>
        <begin position="1"/>
        <end position="512"/>
    </location>
</feature>
<dbReference type="EMBL" id="AY034190">
    <property type="protein sequence ID" value="AAK61561.1"/>
    <property type="molecule type" value="Genomic_DNA"/>
</dbReference>
<dbReference type="GO" id="GO:0009507">
    <property type="term" value="C:chloroplast"/>
    <property type="evidence" value="ECO:0007669"/>
    <property type="project" value="UniProtKB-SubCell"/>
</dbReference>
<dbReference type="GO" id="GO:0003723">
    <property type="term" value="F:RNA binding"/>
    <property type="evidence" value="ECO:0007669"/>
    <property type="project" value="UniProtKB-KW"/>
</dbReference>
<dbReference type="GO" id="GO:0006397">
    <property type="term" value="P:mRNA processing"/>
    <property type="evidence" value="ECO:0007669"/>
    <property type="project" value="UniProtKB-KW"/>
</dbReference>
<dbReference type="GO" id="GO:0008380">
    <property type="term" value="P:RNA splicing"/>
    <property type="evidence" value="ECO:0007669"/>
    <property type="project" value="UniProtKB-UniRule"/>
</dbReference>
<dbReference type="GO" id="GO:0008033">
    <property type="term" value="P:tRNA processing"/>
    <property type="evidence" value="ECO:0007669"/>
    <property type="project" value="UniProtKB-KW"/>
</dbReference>
<dbReference type="HAMAP" id="MF_01390">
    <property type="entry name" value="MatK"/>
    <property type="match status" value="1"/>
</dbReference>
<dbReference type="InterPro" id="IPR024937">
    <property type="entry name" value="Domain_X"/>
</dbReference>
<dbReference type="InterPro" id="IPR002866">
    <property type="entry name" value="Maturase_MatK"/>
</dbReference>
<dbReference type="InterPro" id="IPR024942">
    <property type="entry name" value="Maturase_MatK_N"/>
</dbReference>
<dbReference type="PANTHER" id="PTHR34811">
    <property type="entry name" value="MATURASE K"/>
    <property type="match status" value="1"/>
</dbReference>
<dbReference type="PANTHER" id="PTHR34811:SF1">
    <property type="entry name" value="MATURASE K"/>
    <property type="match status" value="1"/>
</dbReference>
<dbReference type="Pfam" id="PF01348">
    <property type="entry name" value="Intron_maturas2"/>
    <property type="match status" value="1"/>
</dbReference>
<dbReference type="Pfam" id="PF01824">
    <property type="entry name" value="MatK_N"/>
    <property type="match status" value="1"/>
</dbReference>
<proteinExistence type="inferred from homology"/>
<accession>Q8WHM0</accession>
<evidence type="ECO:0000255" key="1">
    <source>
        <dbReference type="HAMAP-Rule" id="MF_01390"/>
    </source>
</evidence>
<keyword id="KW-0150">Chloroplast</keyword>
<keyword id="KW-0507">mRNA processing</keyword>
<keyword id="KW-0934">Plastid</keyword>
<keyword id="KW-0694">RNA-binding</keyword>
<keyword id="KW-0819">tRNA processing</keyword>
<reference key="1">
    <citation type="journal article" date="2002" name="Syst. Bot.">
        <title>Phylogeny and systematics of Lemnaceae, the duckweed family.</title>
        <authorList>
            <person name="Les D.H."/>
            <person name="Crawford D.J."/>
            <person name="Landolt E."/>
            <person name="Gabel J.D."/>
            <person name="Kimball R.T."/>
        </authorList>
        <dbReference type="AGRICOLA" id="IND23289763"/>
    </citation>
    <scope>NUCLEOTIDE SEQUENCE [GENOMIC DNA]</scope>
</reference>